<sequence length="88" mass="9566">MSQGDIIHFTSQALWLVLVLSMPPVLVAAVVGTLVSLVQALTQIQEQTLGFVIKLIAVVVTLFATASWLGNELHSFAEMTMMKIQGIR</sequence>
<protein>
    <recommendedName>
        <fullName>Yop proteins translocation protein S</fullName>
    </recommendedName>
</protein>
<gene>
    <name type="primary">yscS</name>
    <name type="ordered locus">YPCD1.45</name>
    <name type="ordered locus">y5033</name>
    <name type="ordered locus">y0036</name>
    <name type="ordered locus">YP_pCD38</name>
</gene>
<organism>
    <name type="scientific">Yersinia pestis</name>
    <dbReference type="NCBI Taxonomy" id="632"/>
    <lineage>
        <taxon>Bacteria</taxon>
        <taxon>Pseudomonadati</taxon>
        <taxon>Pseudomonadota</taxon>
        <taxon>Gammaproteobacteria</taxon>
        <taxon>Enterobacterales</taxon>
        <taxon>Yersiniaceae</taxon>
        <taxon>Yersinia</taxon>
    </lineage>
</organism>
<keyword id="KW-1003">Cell membrane</keyword>
<keyword id="KW-0472">Membrane</keyword>
<keyword id="KW-0614">Plasmid</keyword>
<keyword id="KW-0653">Protein transport</keyword>
<keyword id="KW-1185">Reference proteome</keyword>
<keyword id="KW-0812">Transmembrane</keyword>
<keyword id="KW-1133">Transmembrane helix</keyword>
<keyword id="KW-0813">Transport</keyword>
<keyword id="KW-0843">Virulence</keyword>
<dbReference type="EMBL" id="AF020214">
    <property type="protein sequence ID" value="AAB72202.1"/>
    <property type="molecule type" value="Genomic_DNA"/>
</dbReference>
<dbReference type="EMBL" id="AF074612">
    <property type="protein sequence ID" value="AAC69786.1"/>
    <property type="molecule type" value="Genomic_DNA"/>
</dbReference>
<dbReference type="EMBL" id="AF053946">
    <property type="protein sequence ID" value="AAC62559.1"/>
    <property type="molecule type" value="Genomic_DNA"/>
</dbReference>
<dbReference type="EMBL" id="AL117189">
    <property type="protein sequence ID" value="CAB54922.1"/>
    <property type="molecule type" value="Genomic_DNA"/>
</dbReference>
<dbReference type="EMBL" id="AE017043">
    <property type="protein sequence ID" value="AAS58557.1"/>
    <property type="molecule type" value="Genomic_DNA"/>
</dbReference>
<dbReference type="PIR" id="C36955">
    <property type="entry name" value="C36955"/>
</dbReference>
<dbReference type="PIR" id="T43580">
    <property type="entry name" value="T43580"/>
</dbReference>
<dbReference type="RefSeq" id="NP_395179.1">
    <property type="nucleotide sequence ID" value="NC_003131.1"/>
</dbReference>
<dbReference type="RefSeq" id="NP_857737.1">
    <property type="nucleotide sequence ID" value="NC_004836.1"/>
</dbReference>
<dbReference type="RefSeq" id="NP_857932.1">
    <property type="nucleotide sequence ID" value="NC_004839.1"/>
</dbReference>
<dbReference type="RefSeq" id="WP_002212945.1">
    <property type="nucleotide sequence ID" value="NZ_WUCM01000070.1"/>
</dbReference>
<dbReference type="SMR" id="P69982"/>
<dbReference type="IntAct" id="P69982">
    <property type="interactions" value="2"/>
</dbReference>
<dbReference type="MINT" id="P69982"/>
<dbReference type="PaxDb" id="214092-5832465"/>
<dbReference type="EnsemblBacteria" id="AAS58557">
    <property type="protein sequence ID" value="AAS58557"/>
    <property type="gene ID" value="YP_pCD38"/>
</dbReference>
<dbReference type="GeneID" id="31412293"/>
<dbReference type="KEGG" id="ype:YPCD1.45"/>
<dbReference type="KEGG" id="ypm:YP_pCD38"/>
<dbReference type="PATRIC" id="fig|214092.21.peg.56"/>
<dbReference type="eggNOG" id="COG4794">
    <property type="taxonomic scope" value="Bacteria"/>
</dbReference>
<dbReference type="HOGENOM" id="CLU_164516_1_1_6"/>
<dbReference type="OMA" id="RSAIWTI"/>
<dbReference type="OrthoDB" id="9806440at2"/>
<dbReference type="Proteomes" id="UP000000815">
    <property type="component" value="Plasmid pCD1"/>
</dbReference>
<dbReference type="Proteomes" id="UP000001019">
    <property type="component" value="Plasmid pCD1"/>
</dbReference>
<dbReference type="GO" id="GO:0005886">
    <property type="term" value="C:plasma membrane"/>
    <property type="evidence" value="ECO:0007669"/>
    <property type="project" value="UniProtKB-SubCell"/>
</dbReference>
<dbReference type="GO" id="GO:0044780">
    <property type="term" value="P:bacterial-type flagellum assembly"/>
    <property type="evidence" value="ECO:0000318"/>
    <property type="project" value="GO_Central"/>
</dbReference>
<dbReference type="GO" id="GO:0009306">
    <property type="term" value="P:protein secretion"/>
    <property type="evidence" value="ECO:0007669"/>
    <property type="project" value="InterPro"/>
</dbReference>
<dbReference type="InterPro" id="IPR002191">
    <property type="entry name" value="Bac_export_3"/>
</dbReference>
<dbReference type="InterPro" id="IPR006306">
    <property type="entry name" value="T3SS_HrpO"/>
</dbReference>
<dbReference type="NCBIfam" id="TIGR01403">
    <property type="entry name" value="fliQ_rel_III"/>
    <property type="match status" value="1"/>
</dbReference>
<dbReference type="PANTHER" id="PTHR34040">
    <property type="entry name" value="FLAGELLAR BIOSYNTHETIC PROTEIN FLIQ"/>
    <property type="match status" value="1"/>
</dbReference>
<dbReference type="PANTHER" id="PTHR34040:SF7">
    <property type="entry name" value="SURFACE PRESENTATION OF ANTIGENS PROTEIN SPAQ"/>
    <property type="match status" value="1"/>
</dbReference>
<dbReference type="Pfam" id="PF01313">
    <property type="entry name" value="Bac_export_3"/>
    <property type="match status" value="1"/>
</dbReference>
<dbReference type="PIRSF" id="PIRSF004669">
    <property type="entry name" value="FliQ"/>
    <property type="match status" value="1"/>
</dbReference>
<dbReference type="PRINTS" id="PR00952">
    <property type="entry name" value="TYPE3IMQPROT"/>
</dbReference>
<feature type="chain" id="PRO_0000129113" description="Yop proteins translocation protein S">
    <location>
        <begin position="1"/>
        <end position="88"/>
    </location>
</feature>
<feature type="transmembrane region" description="Helical" evidence="1">
    <location>
        <begin position="15"/>
        <end position="35"/>
    </location>
</feature>
<feature type="transmembrane region" description="Helical" evidence="1">
    <location>
        <begin position="49"/>
        <end position="69"/>
    </location>
</feature>
<feature type="sequence conflict" description="In Ref. 1 and 2." evidence="2" ref="1 2">
    <original>AEMTMMKIQGIR</original>
    <variation>VQK</variation>
    <location>
        <begin position="77"/>
        <end position="88"/>
    </location>
</feature>
<name>YSCS_YERPE</name>
<geneLocation type="plasmid">
    <name>pCD1</name>
</geneLocation>
<proteinExistence type="inferred from homology"/>
<accession>P69982</accession>
<accession>P40298</accession>
<accession>P42715</accession>
<accession>Q663J4</accession>
<comment type="function">
    <text>Component of the Yop secretion machinery.</text>
</comment>
<comment type="subcellular location">
    <subcellularLocation>
        <location evidence="2">Cell membrane</location>
        <topology evidence="2">Multi-pass membrane protein</topology>
    </subcellularLocation>
</comment>
<comment type="similarity">
    <text evidence="2">Belongs to the FliQ/MopD/SpaQ family.</text>
</comment>
<reference key="1">
    <citation type="journal article" date="1994" name="J. Bacteriol.">
        <title>A low-Ca2+ response (LCR) secretion (ysc) locus lies within the lcrB region of the LCR plasmid in Yersinia pestis.</title>
        <authorList>
            <person name="Fields K.A."/>
            <person name="Plano G.V."/>
            <person name="Straley S.C."/>
        </authorList>
    </citation>
    <scope>NUCLEOTIDE SEQUENCE [GENOMIC DNA]</scope>
    <source>
        <strain>KIM5 / Biovar Mediaevalis</strain>
    </source>
</reference>
<reference key="2">
    <citation type="submission" date="1997-10" db="EMBL/GenBank/DDBJ databases">
        <authorList>
            <person name="Payne P.L."/>
            <person name="Fields K.A."/>
            <person name="Straley S.C."/>
        </authorList>
    </citation>
    <scope>NUCLEOTIDE SEQUENCE [GENOMIC DNA]</scope>
    <source>
        <strain>KIM5 / Biovar Mediaevalis</strain>
    </source>
</reference>
<reference key="3">
    <citation type="journal article" date="1998" name="Infect. Immun.">
        <title>DNA sequencing and analysis of the low-Ca2+-response plasmid pCD1 of Yersinia pestis KIM5.</title>
        <authorList>
            <person name="Perry R.D."/>
            <person name="Straley S.C."/>
            <person name="Fetherston J.D."/>
            <person name="Rose D.J."/>
            <person name="Gregor J."/>
            <person name="Blattner F.R."/>
        </authorList>
    </citation>
    <scope>NUCLEOTIDE SEQUENCE [GENOMIC DNA]</scope>
    <source>
        <strain>KIM5 / Biovar Mediaevalis</strain>
    </source>
</reference>
<reference key="4">
    <citation type="journal article" date="1998" name="J. Bacteriol.">
        <title>Structural organization of virulence-associated plasmids of Yersinia pestis.</title>
        <authorList>
            <person name="Hu P."/>
            <person name="Elliott J."/>
            <person name="McCready P."/>
            <person name="Skowronski E."/>
            <person name="Garnes J."/>
            <person name="Kobayashi A."/>
            <person name="Brubaker R.R."/>
            <person name="Garcia E."/>
        </authorList>
    </citation>
    <scope>NUCLEOTIDE SEQUENCE [GENOMIC DNA]</scope>
    <source>
        <strain>KIM5 / Biovar Mediaevalis</strain>
    </source>
</reference>
<reference key="5">
    <citation type="journal article" date="2001" name="Nature">
        <title>Genome sequence of Yersinia pestis, the causative agent of plague.</title>
        <authorList>
            <person name="Parkhill J."/>
            <person name="Wren B.W."/>
            <person name="Thomson N.R."/>
            <person name="Titball R.W."/>
            <person name="Holden M.T.G."/>
            <person name="Prentice M.B."/>
            <person name="Sebaihia M."/>
            <person name="James K.D."/>
            <person name="Churcher C.M."/>
            <person name="Mungall K.L."/>
            <person name="Baker S."/>
            <person name="Basham D."/>
            <person name="Bentley S.D."/>
            <person name="Brooks K."/>
            <person name="Cerdeno-Tarraga A.-M."/>
            <person name="Chillingworth T."/>
            <person name="Cronin A."/>
            <person name="Davies R.M."/>
            <person name="Davis P."/>
            <person name="Dougan G."/>
            <person name="Feltwell T."/>
            <person name="Hamlin N."/>
            <person name="Holroyd S."/>
            <person name="Jagels K."/>
            <person name="Karlyshev A.V."/>
            <person name="Leather S."/>
            <person name="Moule S."/>
            <person name="Oyston P.C.F."/>
            <person name="Quail M.A."/>
            <person name="Rutherford K.M."/>
            <person name="Simmonds M."/>
            <person name="Skelton J."/>
            <person name="Stevens K."/>
            <person name="Whitehead S."/>
            <person name="Barrell B.G."/>
        </authorList>
    </citation>
    <scope>NUCLEOTIDE SEQUENCE [LARGE SCALE GENOMIC DNA]</scope>
    <source>
        <strain>CO-92 / Biovar Orientalis</strain>
    </source>
</reference>
<reference key="6">
    <citation type="journal article" date="2004" name="DNA Res.">
        <title>Complete genome sequence of Yersinia pestis strain 91001, an isolate avirulent to humans.</title>
        <authorList>
            <person name="Song Y."/>
            <person name="Tong Z."/>
            <person name="Wang J."/>
            <person name="Wang L."/>
            <person name="Guo Z."/>
            <person name="Han Y."/>
            <person name="Zhang J."/>
            <person name="Pei D."/>
            <person name="Zhou D."/>
            <person name="Qin H."/>
            <person name="Pang X."/>
            <person name="Han Y."/>
            <person name="Zhai J."/>
            <person name="Li M."/>
            <person name="Cui B."/>
            <person name="Qi Z."/>
            <person name="Jin L."/>
            <person name="Dai R."/>
            <person name="Chen F."/>
            <person name="Li S."/>
            <person name="Ye C."/>
            <person name="Du Z."/>
            <person name="Lin W."/>
            <person name="Wang J."/>
            <person name="Yu J."/>
            <person name="Yang H."/>
            <person name="Wang J."/>
            <person name="Huang P."/>
            <person name="Yang R."/>
        </authorList>
    </citation>
    <scope>NUCLEOTIDE SEQUENCE [LARGE SCALE GENOMIC DNA]</scope>
    <source>
        <strain>91001 / Biovar Mediaevalis</strain>
    </source>
</reference>
<evidence type="ECO:0000255" key="1"/>
<evidence type="ECO:0000305" key="2"/>